<gene>
    <name type="primary">cerB</name>
</gene>
<name>PHL3_BACCE</name>
<proteinExistence type="inferred from homology"/>
<feature type="signal peptide" evidence="2">
    <location>
        <begin position="1"/>
        <end position="26"/>
    </location>
</feature>
<feature type="chain" id="PRO_0000019901" description="Sphingomyelinase C">
    <location>
        <begin position="27"/>
        <end position="333"/>
    </location>
</feature>
<feature type="disulfide bond" evidence="1">
    <location>
        <begin position="150"/>
        <end position="186"/>
    </location>
</feature>
<evidence type="ECO:0000250" key="1"/>
<evidence type="ECO:0000255" key="2"/>
<evidence type="ECO:0000305" key="3"/>
<sequence>MKGKLLKGVLSLGVGLGALYSGTSAQAEASTNQNDTLKVMTHNVYMLSTNLYPNWGQTERADLFGAADYIKNQDVVILNEVFDNSASDRLLGNLKKEYPNQTAVLGRSSGSEWDKTLGNYSSSTPEDGGVAIVSKWPIAEKIQYVFAKGCGPDNLSNKGFVYTKIKKNDRFVHVIGTHLQAEDSMCGKTSPASVRTNQLKEIQDFIKNKNIPNNEYVLIGGDMNVNKINAENNNDSEYASMFKTLNASVPSYTGHTATWDATTNSIAKYNFPDSLAEYLDYIIASKDHANPSYIENKVLQPKSPQWTVTSWFKNIRIMITLIIIQVEATISMK</sequence>
<accession>P33377</accession>
<dbReference type="EC" id="3.1.4.12"/>
<dbReference type="EMBL" id="M24149">
    <property type="protein sequence ID" value="AAA91820.1"/>
    <property type="molecule type" value="Genomic_DNA"/>
</dbReference>
<dbReference type="SMR" id="P33377"/>
<dbReference type="SABIO-RK" id="P33377"/>
<dbReference type="GO" id="GO:0005576">
    <property type="term" value="C:extracellular region"/>
    <property type="evidence" value="ECO:0007669"/>
    <property type="project" value="UniProtKB-SubCell"/>
</dbReference>
<dbReference type="GO" id="GO:0004767">
    <property type="term" value="F:sphingomyelin phosphodiesterase activity"/>
    <property type="evidence" value="ECO:0007669"/>
    <property type="project" value="UniProtKB-EC"/>
</dbReference>
<dbReference type="GO" id="GO:0031640">
    <property type="term" value="P:killing of cells of another organism"/>
    <property type="evidence" value="ECO:0007669"/>
    <property type="project" value="UniProtKB-KW"/>
</dbReference>
<dbReference type="CDD" id="cd09078">
    <property type="entry name" value="nSMase"/>
    <property type="match status" value="1"/>
</dbReference>
<dbReference type="FunFam" id="3.60.10.10:FF:000063">
    <property type="entry name" value="Sphingomyelinase C"/>
    <property type="match status" value="1"/>
</dbReference>
<dbReference type="Gene3D" id="3.60.10.10">
    <property type="entry name" value="Endonuclease/exonuclease/phosphatase"/>
    <property type="match status" value="1"/>
</dbReference>
<dbReference type="InterPro" id="IPR036691">
    <property type="entry name" value="Endo/exonu/phosph_ase_sf"/>
</dbReference>
<dbReference type="InterPro" id="IPR005135">
    <property type="entry name" value="Endo/exonuclease/phosphatase"/>
</dbReference>
<dbReference type="InterPro" id="IPR038772">
    <property type="entry name" value="Sph/SMPD2-like"/>
</dbReference>
<dbReference type="InterPro" id="IPR017766">
    <property type="entry name" value="Sphingomyelinase/PLipase_C"/>
</dbReference>
<dbReference type="NCBIfam" id="TIGR03395">
    <property type="entry name" value="sphingomy"/>
    <property type="match status" value="1"/>
</dbReference>
<dbReference type="PANTHER" id="PTHR16320:SF23">
    <property type="entry name" value="SPHINGOMYELINASE C 1"/>
    <property type="match status" value="1"/>
</dbReference>
<dbReference type="PANTHER" id="PTHR16320">
    <property type="entry name" value="SPHINGOMYELINASE FAMILY MEMBER"/>
    <property type="match status" value="1"/>
</dbReference>
<dbReference type="Pfam" id="PF03372">
    <property type="entry name" value="Exo_endo_phos"/>
    <property type="match status" value="1"/>
</dbReference>
<dbReference type="SUPFAM" id="SSF56219">
    <property type="entry name" value="DNase I-like"/>
    <property type="match status" value="1"/>
</dbReference>
<keyword id="KW-0204">Cytolysis</keyword>
<keyword id="KW-1015">Disulfide bond</keyword>
<keyword id="KW-0354">Hemolysis</keyword>
<keyword id="KW-0378">Hydrolase</keyword>
<keyword id="KW-0964">Secreted</keyword>
<keyword id="KW-0732">Signal</keyword>
<reference key="1">
    <citation type="journal article" date="1989" name="J. Bacteriol.">
        <title>A Bacillus cereus cytolytic determinant, cereolysin AB, which comprises the phospholipase C and sphingomyelinase genes: nucleotide sequence and genetic linkage.</title>
        <authorList>
            <person name="Gilmore M.S."/>
            <person name="Cruz-Rodz A.L."/>
            <person name="Leimeister-Waechter M."/>
            <person name="Kreft J."/>
            <person name="Goebel W."/>
        </authorList>
    </citation>
    <scope>NUCLEOTIDE SEQUENCE [GENOMIC DNA]</scope>
    <source>
        <strain>GP-4</strain>
    </source>
</reference>
<organism>
    <name type="scientific">Bacillus cereus</name>
    <dbReference type="NCBI Taxonomy" id="1396"/>
    <lineage>
        <taxon>Bacteria</taxon>
        <taxon>Bacillati</taxon>
        <taxon>Bacillota</taxon>
        <taxon>Bacilli</taxon>
        <taxon>Bacillales</taxon>
        <taxon>Bacillaceae</taxon>
        <taxon>Bacillus</taxon>
        <taxon>Bacillus cereus group</taxon>
    </lineage>
</organism>
<protein>
    <recommendedName>
        <fullName>Sphingomyelinase C</fullName>
        <shortName>SMase</shortName>
        <ecNumber>3.1.4.12</ecNumber>
    </recommendedName>
    <alternativeName>
        <fullName>Cereolysin B</fullName>
    </alternativeName>
    <alternativeName>
        <fullName>SMPLC</fullName>
    </alternativeName>
    <alternativeName>
        <fullName>Sphingomyelin phosphodiesterase</fullName>
    </alternativeName>
</protein>
<comment type="function">
    <text>Required, with sphingomyelinase, to effect target cell lysis (hemolysis).</text>
</comment>
<comment type="catalytic activity">
    <reaction>
        <text>a sphingomyelin + H2O = phosphocholine + an N-acylsphing-4-enine + H(+)</text>
        <dbReference type="Rhea" id="RHEA:19253"/>
        <dbReference type="ChEBI" id="CHEBI:15377"/>
        <dbReference type="ChEBI" id="CHEBI:15378"/>
        <dbReference type="ChEBI" id="CHEBI:17636"/>
        <dbReference type="ChEBI" id="CHEBI:52639"/>
        <dbReference type="ChEBI" id="CHEBI:295975"/>
        <dbReference type="EC" id="3.1.4.12"/>
    </reaction>
</comment>
<comment type="cofactor">
    <cofactor>
        <name>Mg(2+)</name>
        <dbReference type="ChEBI" id="CHEBI:18420"/>
    </cofactor>
</comment>
<comment type="activity regulation">
    <text>Activated by cobalt and manganese ions.</text>
</comment>
<comment type="subcellular location">
    <subcellularLocation>
        <location>Secreted</location>
    </subcellularLocation>
</comment>
<comment type="PTM">
    <text>The N-terminus is blocked.</text>
</comment>
<comment type="similarity">
    <text evidence="3">Belongs to the neutral sphingomyelinase family.</text>
</comment>